<proteinExistence type="predicted"/>
<accession>Q9FJU3</accession>
<sequence>MAEISGLPDDLLVKILAFLPTKVAISTSVLSKQWRFLWMWLPKLKYDDYDDITDGFNSVSAFQTYRDFIAKNLPLHRAPIIESLSLGFRCGTLQPEDLKSWVEVAVSRSVRELSILAYYRNNYALSSSSLYTCKSLVTLKGFNIRVDVPPTVCLLPSLRTLELKRVRYLNEDSLRMLLSFCPVLEYLSIERHDNDNLRGLVVDVPSLRRLSLTSYTGCSSDDYVIVTPSLKYFKAFDYRSEISSYKIEKIPELEEADISIERNPEKLFVYFKSIKCLSLQVDFNSKEEPGYDSGIVFNHLEELTPYINDANWSKLLFRLLNDSPKLRVLEISNSKSFYKEKIGEYLPVSWSKNQGSVPKCFLNSLETFRVKWYYSEEQEDRDFLSLIFKHARCLKSTSILHR</sequence>
<reference key="1">
    <citation type="journal article" date="1998" name="DNA Res.">
        <title>Structural analysis of Arabidopsis thaliana chromosome 5. VI. Sequence features of the regions of 1,367,185 bp covered by 19 physically assigned P1 and TAC clones.</title>
        <authorList>
            <person name="Kotani H."/>
            <person name="Nakamura Y."/>
            <person name="Sato S."/>
            <person name="Asamizu E."/>
            <person name="Kaneko T."/>
            <person name="Miyajima N."/>
            <person name="Tabata S."/>
        </authorList>
    </citation>
    <scope>NUCLEOTIDE SEQUENCE [LARGE SCALE GENOMIC DNA]</scope>
    <source>
        <strain>cv. Columbia</strain>
    </source>
</reference>
<reference key="2">
    <citation type="journal article" date="2017" name="Plant J.">
        <title>Araport11: a complete reannotation of the Arabidopsis thaliana reference genome.</title>
        <authorList>
            <person name="Cheng C.Y."/>
            <person name="Krishnakumar V."/>
            <person name="Chan A.P."/>
            <person name="Thibaud-Nissen F."/>
            <person name="Schobel S."/>
            <person name="Town C.D."/>
        </authorList>
    </citation>
    <scope>GENOME REANNOTATION</scope>
    <source>
        <strain>cv. Columbia</strain>
    </source>
</reference>
<keyword id="KW-1185">Reference proteome</keyword>
<protein>
    <recommendedName>
        <fullName>Putative FBD-associated F-box protein At5g56690</fullName>
    </recommendedName>
</protein>
<name>FBD28_ARATH</name>
<dbReference type="EMBL" id="AB013392">
    <property type="protein sequence ID" value="BAB09887.1"/>
    <property type="molecule type" value="Genomic_DNA"/>
</dbReference>
<dbReference type="EMBL" id="CP002688">
    <property type="protein sequence ID" value="AED96796.1"/>
    <property type="molecule type" value="Genomic_DNA"/>
</dbReference>
<dbReference type="RefSeq" id="NP_200480.1">
    <property type="nucleotide sequence ID" value="NM_125052.1"/>
</dbReference>
<dbReference type="STRING" id="3702.Q9FJU3"/>
<dbReference type="GlyGen" id="Q9FJU3">
    <property type="glycosylation" value="1 site"/>
</dbReference>
<dbReference type="PaxDb" id="3702-AT5G56690.1"/>
<dbReference type="EnsemblPlants" id="AT5G56690.1">
    <property type="protein sequence ID" value="AT5G56690.1"/>
    <property type="gene ID" value="AT5G56690"/>
</dbReference>
<dbReference type="GeneID" id="835770"/>
<dbReference type="Gramene" id="AT5G56690.1">
    <property type="protein sequence ID" value="AT5G56690.1"/>
    <property type="gene ID" value="AT5G56690"/>
</dbReference>
<dbReference type="KEGG" id="ath:AT5G56690"/>
<dbReference type="Araport" id="AT5G56690"/>
<dbReference type="TAIR" id="AT5G56690"/>
<dbReference type="HOGENOM" id="CLU_010721_1_2_1"/>
<dbReference type="InParanoid" id="Q9FJU3"/>
<dbReference type="OMA" id="SFCHKEE"/>
<dbReference type="PhylomeDB" id="Q9FJU3"/>
<dbReference type="PRO" id="PR:Q9FJU3"/>
<dbReference type="Proteomes" id="UP000006548">
    <property type="component" value="Chromosome 5"/>
</dbReference>
<dbReference type="CDD" id="cd22160">
    <property type="entry name" value="F-box_AtFBL13-like"/>
    <property type="match status" value="1"/>
</dbReference>
<dbReference type="Gene3D" id="1.20.1280.50">
    <property type="match status" value="1"/>
</dbReference>
<dbReference type="Gene3D" id="3.80.10.10">
    <property type="entry name" value="Ribonuclease Inhibitor"/>
    <property type="match status" value="1"/>
</dbReference>
<dbReference type="InterPro" id="IPR036047">
    <property type="entry name" value="F-box-like_dom_sf"/>
</dbReference>
<dbReference type="InterPro" id="IPR053781">
    <property type="entry name" value="F-box_AtFBL13-like"/>
</dbReference>
<dbReference type="InterPro" id="IPR001810">
    <property type="entry name" value="F-box_dom"/>
</dbReference>
<dbReference type="InterPro" id="IPR006566">
    <property type="entry name" value="FBD"/>
</dbReference>
<dbReference type="InterPro" id="IPR050232">
    <property type="entry name" value="FBL13/AtMIF1-like"/>
</dbReference>
<dbReference type="InterPro" id="IPR032675">
    <property type="entry name" value="LRR_dom_sf"/>
</dbReference>
<dbReference type="InterPro" id="IPR055411">
    <property type="entry name" value="LRR_FXL15/At3g58940/PEG3-like"/>
</dbReference>
<dbReference type="PANTHER" id="PTHR31900">
    <property type="entry name" value="F-BOX/RNI SUPERFAMILY PROTEIN-RELATED"/>
    <property type="match status" value="1"/>
</dbReference>
<dbReference type="PANTHER" id="PTHR31900:SF28">
    <property type="entry name" value="FBD DOMAIN-CONTAINING PROTEIN"/>
    <property type="match status" value="1"/>
</dbReference>
<dbReference type="Pfam" id="PF00646">
    <property type="entry name" value="F-box"/>
    <property type="match status" value="1"/>
</dbReference>
<dbReference type="Pfam" id="PF08387">
    <property type="entry name" value="FBD"/>
    <property type="match status" value="1"/>
</dbReference>
<dbReference type="Pfam" id="PF24758">
    <property type="entry name" value="LRR_At5g56370"/>
    <property type="match status" value="1"/>
</dbReference>
<dbReference type="SMART" id="SM00256">
    <property type="entry name" value="FBOX"/>
    <property type="match status" value="1"/>
</dbReference>
<dbReference type="SUPFAM" id="SSF81383">
    <property type="entry name" value="F-box domain"/>
    <property type="match status" value="1"/>
</dbReference>
<dbReference type="SUPFAM" id="SSF52047">
    <property type="entry name" value="RNI-like"/>
    <property type="match status" value="1"/>
</dbReference>
<organism>
    <name type="scientific">Arabidopsis thaliana</name>
    <name type="common">Mouse-ear cress</name>
    <dbReference type="NCBI Taxonomy" id="3702"/>
    <lineage>
        <taxon>Eukaryota</taxon>
        <taxon>Viridiplantae</taxon>
        <taxon>Streptophyta</taxon>
        <taxon>Embryophyta</taxon>
        <taxon>Tracheophyta</taxon>
        <taxon>Spermatophyta</taxon>
        <taxon>Magnoliopsida</taxon>
        <taxon>eudicotyledons</taxon>
        <taxon>Gunneridae</taxon>
        <taxon>Pentapetalae</taxon>
        <taxon>rosids</taxon>
        <taxon>malvids</taxon>
        <taxon>Brassicales</taxon>
        <taxon>Brassicaceae</taxon>
        <taxon>Camelineae</taxon>
        <taxon>Arabidopsis</taxon>
    </lineage>
</organism>
<gene>
    <name type="ordered locus">At5g56690</name>
    <name type="ORF">MIK19.14</name>
</gene>
<feature type="chain" id="PRO_0000283160" description="Putative FBD-associated F-box protein At5g56690">
    <location>
        <begin position="1"/>
        <end position="402"/>
    </location>
</feature>
<feature type="domain" description="F-box">
    <location>
        <begin position="1"/>
        <end position="47"/>
    </location>
</feature>
<feature type="domain" description="FBD">
    <location>
        <begin position="349"/>
        <end position="401"/>
    </location>
</feature>